<sequence length="314" mass="35431">MTSQHQEHTGTKRFSIQSDPVEIHRAIVEDGVAIIEGFLTPEQVQKLNKDVDAPLKADREQLKFKADKKDDPHFWLADFIPDHVARVHNLVDFSHCFRHEILNHELLHKICRLTFEESGDYWLGYGAVIENGPGTTEQKWHRDQPRYPLVKEGPDAPEGMLNFFTALTDFDAETGKTQYILGSNKRVELGEPDADHPIEYVGLKPGDTTIVSGKITHRGSDNRSDKMRRAMPIMIIPSILTPFDATCHLSRELVETMTPLAQKMICRRSVMIPAPGTVEVKTGIWCVNMREAGEQIGLKSNQRAKEDAEATDAV</sequence>
<gene>
    <name evidence="14" type="primary">easH</name>
    <name type="synonym">easH1</name>
    <name type="synonym">orfC</name>
    <name type="ORF">CPUR_04075</name>
</gene>
<keyword id="KW-0002">3D-structure</keyword>
<keyword id="KW-0017">Alkaloid metabolism</keyword>
<keyword id="KW-0223">Dioxygenase</keyword>
<keyword id="KW-0408">Iron</keyword>
<keyword id="KW-0479">Metal-binding</keyword>
<keyword id="KW-0560">Oxidoreductase</keyword>
<keyword id="KW-1185">Reference proteome</keyword>
<evidence type="ECO:0000250" key="1">
    <source>
        <dbReference type="UniProtKB" id="Q4WAW9"/>
    </source>
</evidence>
<evidence type="ECO:0000250" key="2">
    <source>
        <dbReference type="UniProtKB" id="Q50EL0"/>
    </source>
</evidence>
<evidence type="ECO:0000269" key="3">
    <source>
    </source>
</evidence>
<evidence type="ECO:0000269" key="4">
    <source>
    </source>
</evidence>
<evidence type="ECO:0000269" key="5">
    <source>
    </source>
</evidence>
<evidence type="ECO:0000269" key="6">
    <source>
    </source>
</evidence>
<evidence type="ECO:0000269" key="7">
    <source>
    </source>
</evidence>
<evidence type="ECO:0000269" key="8">
    <source>
    </source>
</evidence>
<evidence type="ECO:0000269" key="9">
    <source>
    </source>
</evidence>
<evidence type="ECO:0000269" key="10">
    <source>
    </source>
</evidence>
<evidence type="ECO:0000269" key="11">
    <source>
    </source>
</evidence>
<evidence type="ECO:0000269" key="12">
    <source>
    </source>
</evidence>
<evidence type="ECO:0000269" key="13">
    <source>
    </source>
</evidence>
<evidence type="ECO:0000303" key="14">
    <source>
    </source>
</evidence>
<evidence type="ECO:0000305" key="15"/>
<evidence type="ECO:0000305" key="16">
    <source>
    </source>
</evidence>
<evidence type="ECO:0000305" key="17">
    <source>
    </source>
</evidence>
<evidence type="ECO:0007744" key="18">
    <source>
        <dbReference type="PDB" id="4NAO"/>
    </source>
</evidence>
<evidence type="ECO:0007829" key="19">
    <source>
        <dbReference type="PDB" id="4NAO"/>
    </source>
</evidence>
<organism>
    <name type="scientific">Claviceps purpurea (strain 20.1)</name>
    <name type="common">Ergot fungus</name>
    <name type="synonym">Sphacelia segetum</name>
    <dbReference type="NCBI Taxonomy" id="1111077"/>
    <lineage>
        <taxon>Eukaryota</taxon>
        <taxon>Fungi</taxon>
        <taxon>Dikarya</taxon>
        <taxon>Ascomycota</taxon>
        <taxon>Pezizomycotina</taxon>
        <taxon>Sordariomycetes</taxon>
        <taxon>Hypocreomycetidae</taxon>
        <taxon>Hypocreales</taxon>
        <taxon>Clavicipitaceae</taxon>
        <taxon>Claviceps</taxon>
    </lineage>
</organism>
<protein>
    <recommendedName>
        <fullName evidence="14">Dioxygenase easH</fullName>
        <ecNumber evidence="13">1.14.11.-</ecNumber>
    </recommendedName>
    <alternativeName>
        <fullName evidence="14">Ergot alkaloid biosynthesis protein H</fullName>
    </alternativeName>
</protein>
<proteinExistence type="evidence at protein level"/>
<reference key="1">
    <citation type="submission" date="2011-06" db="EMBL/GenBank/DDBJ databases">
        <authorList>
            <person name="D'Auria J.C."/>
            <person name="Beuerle T."/>
            <person name="Pichersky E."/>
            <person name="Dudareva N."/>
        </authorList>
    </citation>
    <scope>NUCLEOTIDE SEQUENCE [GENOMIC DNA]</scope>
    <source>
        <strain>20.1</strain>
    </source>
</reference>
<reference key="2">
    <citation type="journal article" date="2013" name="PLoS Genet.">
        <title>Plant-symbiotic fungi as chemical engineers: Multi-genome analysis of the Clavicipitaceae reveals dynamics of alkaloid loci.</title>
        <authorList>
            <person name="Schardl C.L."/>
            <person name="Young C.A."/>
            <person name="Hesse U."/>
            <person name="Amyotte S.G."/>
            <person name="Andreeva K."/>
            <person name="Calie P.J."/>
            <person name="Fleetwood D.J."/>
            <person name="Haws D.C."/>
            <person name="Moore N."/>
            <person name="Oeser B."/>
            <person name="Panaccione D.G."/>
            <person name="Schweri K.K."/>
            <person name="Voisey C.R."/>
            <person name="Farman M.L."/>
            <person name="Jaromczyk J.W."/>
            <person name="Roe B.A."/>
            <person name="O'Sullivan D.M."/>
            <person name="Scott B."/>
            <person name="Tudzynski P."/>
            <person name="An Z."/>
            <person name="Arnaoudova E.G."/>
            <person name="Bullock C.T."/>
            <person name="Charlton N.D."/>
            <person name="Chen L."/>
            <person name="Cox M."/>
            <person name="Dinkins R.D."/>
            <person name="Florea S."/>
            <person name="Glenn A.E."/>
            <person name="Gordon A."/>
            <person name="Gueldener U."/>
            <person name="Harris D.R."/>
            <person name="Hollin W."/>
            <person name="Jaromczyk J."/>
            <person name="Johnson R.D."/>
            <person name="Khan A.K."/>
            <person name="Leistner E."/>
            <person name="Leuchtmann A."/>
            <person name="Li C."/>
            <person name="Liu J."/>
            <person name="Liu J."/>
            <person name="Liu M."/>
            <person name="Mace W."/>
            <person name="Machado C."/>
            <person name="Nagabhyru P."/>
            <person name="Pan J."/>
            <person name="Schmid J."/>
            <person name="Sugawara K."/>
            <person name="Steiner U."/>
            <person name="Takach J.E."/>
            <person name="Tanaka E."/>
            <person name="Webb J.S."/>
            <person name="Wilson E.V."/>
            <person name="Wiseman J.L."/>
            <person name="Yoshida R."/>
            <person name="Zeng Z."/>
        </authorList>
    </citation>
    <scope>NUCLEOTIDE SEQUENCE [LARGE SCALE GENOMIC DNA]</scope>
    <source>
        <strain>20.1</strain>
    </source>
</reference>
<reference key="3">
    <citation type="journal article" date="2001" name="Appl. Microbiol. Biotechnol.">
        <title>Biotechnology and genetics of ergot alkaloids.</title>
        <authorList>
            <person name="Tudzynski P."/>
            <person name="Correia T."/>
            <person name="Keller U."/>
        </authorList>
    </citation>
    <scope>BIOTECHNOLOGY</scope>
    <source>
        <strain>P1 / 1029/N5</strain>
    </source>
</reference>
<reference key="4">
    <citation type="journal article" date="2003" name="Chem. Biol.">
        <title>Molecular cloning and analysis of the ergopeptine assembly system in the ergot fungus Claviceps purpurea.</title>
        <authorList>
            <person name="Correia T."/>
            <person name="Grammel N."/>
            <person name="Ortel I."/>
            <person name="Keller U."/>
            <person name="Tudzynski P."/>
        </authorList>
    </citation>
    <scope>FUNCTION</scope>
</reference>
<reference key="5">
    <citation type="journal article" date="2004" name="Fungal Genet. Biol.">
        <title>The determinant step in ergot alkaloid biosynthesis by an endophyte of perennial ryegrass.</title>
        <authorList>
            <person name="Wang J."/>
            <person name="Machado C."/>
            <person name="Panaccione D.G."/>
            <person name="Tsai H.-F."/>
            <person name="Schardl C.L."/>
        </authorList>
    </citation>
    <scope>FUNCTION</scope>
    <source>
        <strain>ATCC 20102 / Farmitalia FI 32/17</strain>
    </source>
</reference>
<reference key="6">
    <citation type="journal article" date="2005" name="Phytochemistry">
        <title>The ergot alkaloid gene cluster in Claviceps purpurea: extension of the cluster sequence and intra species evolution.</title>
        <authorList>
            <person name="Haarmann T."/>
            <person name="Machado C."/>
            <person name="Lubbe Y."/>
            <person name="Correia T."/>
            <person name="Schardl C.L."/>
            <person name="Panaccione D.G."/>
            <person name="Tudzynski P."/>
        </authorList>
    </citation>
    <scope>FUNCTION</scope>
    <scope>IDENTIFICATION IN THE EAS CLUSTER</scope>
</reference>
<reference key="7">
    <citation type="journal article" date="2006" name="ChemBioChem">
        <title>Identification of the cytochrome P450 monooxygenase that bridges the clavine and ergoline alkaloid pathways.</title>
        <authorList>
            <person name="Haarmann T."/>
            <person name="Ortel I."/>
            <person name="Tudzynski P."/>
            <person name="Keller U."/>
        </authorList>
    </citation>
    <scope>FUNCTION</scope>
    <source>
        <strain>P1 / 1029/N5</strain>
    </source>
</reference>
<reference key="8">
    <citation type="journal article" date="2007" name="Appl. Environ. Microbiol.">
        <title>A complex ergovaline gene cluster in epichloe endophytes of grasses.</title>
        <authorList>
            <person name="Fleetwood D.J."/>
            <person name="Scott B."/>
            <person name="Lane G.A."/>
            <person name="Tanaka A."/>
            <person name="Johnson R.D."/>
        </authorList>
    </citation>
    <scope>FUNCTION</scope>
</reference>
<reference key="9">
    <citation type="journal article" date="2007" name="Appl. Environ. Microbiol.">
        <title>Comparison of ergot alkaloid biosynthesis gene clusters in Claviceps species indicates loss of late pathway steps in evolution of C. fusiformis.</title>
        <authorList>
            <person name="Lorenz N."/>
            <person name="Wilson E.V."/>
            <person name="Machado C."/>
            <person name="Schardl C.L."/>
            <person name="Tudzynski P."/>
        </authorList>
    </citation>
    <scope>FUNCTION</scope>
</reference>
<reference key="10">
    <citation type="journal article" date="2008" name="Fungal Genet. Biol.">
        <title>Use of a nonhomologous end joining deficient strain (Deltaku70) of the ergot fungus Claviceps purpurea for identification of a nonribosomal peptide synthetase gene involved in ergotamine biosynthesis.</title>
        <authorList>
            <person name="Haarmann T."/>
            <person name="Lorenz N."/>
            <person name="Tudzynski P."/>
        </authorList>
    </citation>
    <scope>FUNCTION</scope>
</reference>
<reference key="11">
    <citation type="journal article" date="2009" name="J. Biol. Chem.">
        <title>Combinatorial assembly of simple and complex D-lysergic acid alkaloid peptide classes in the ergot fungus Claviceps purpurea.</title>
        <authorList>
            <person name="Ortel I."/>
            <person name="Keller U."/>
        </authorList>
    </citation>
    <scope>FUNCTION</scope>
</reference>
<reference key="12">
    <citation type="journal article" date="2010" name="Appl. Environ. Microbiol.">
        <title>Alkaloid cluster gene ccsA of the ergot fungus Claviceps purpurea encodes chanoclavine I synthase, a flavin adenine dinucleotide-containing oxidoreductase mediating the transformation of N-methyl-dimethylallyltryptophan to chanoclavine I.</title>
        <authorList>
            <person name="Lorenz N."/>
            <person name="Olsovska J."/>
            <person name="Sulc M."/>
            <person name="Tudzynski P."/>
        </authorList>
    </citation>
    <scope>FUNCTION</scope>
</reference>
<reference key="13">
    <citation type="journal article" date="2010" name="J. Am. Chem. Soc.">
        <title>Controlling a structural branch point in ergot alkaloid biosynthesis.</title>
        <authorList>
            <person name="Cheng J.Z."/>
            <person name="Coyle C.M."/>
            <person name="Panaccione D.G."/>
            <person name="O'Connor S.E."/>
        </authorList>
    </citation>
    <scope>FUNCTION</scope>
    <source>
        <strain>ATCC 20102 / Farmitalia FI 32/17</strain>
    </source>
</reference>
<reference key="14">
    <citation type="journal article" date="2011" name="Curr. Genet.">
        <title>Ergot cluster-encoded catalase is required for synthesis of chanoclavine-I in Aspergillus fumigatus.</title>
        <authorList>
            <person name="Goetz K.E."/>
            <person name="Coyle C.M."/>
            <person name="Cheng J.Z."/>
            <person name="O'Connor S.E."/>
            <person name="Panaccione D.G."/>
        </authorList>
    </citation>
    <scope>FUNCTION</scope>
</reference>
<reference key="15">
    <citation type="journal article" date="2011" name="Org. Biomol. Chem.">
        <title>New insights into ergot alkaloid biosynthesis in Claviceps purpurea: an agroclavine synthase EasG catalyses, via a non-enzymatic adduct with reduced glutathione, the conversion of chanoclavine-I aldehyde to agroclavine.</title>
        <authorList>
            <person name="Matuschek M."/>
            <person name="Wallwey C."/>
            <person name="Xie X."/>
            <person name="Li S.M."/>
        </authorList>
    </citation>
    <scope>FUNCTION</scope>
</reference>
<reference evidence="18" key="16">
    <citation type="journal article" date="2014" name="Chem. Biol.">
        <title>Cyclolization of D-lysergic acid alkaloid peptides.</title>
        <authorList>
            <person name="Havemann J."/>
            <person name="Vogel D."/>
            <person name="Loll B."/>
            <person name="Keller U."/>
        </authorList>
    </citation>
    <scope>X-RAY CRYSTALLOGRAPHY (1.65 ANGSTROMS) IN COMPLEX WITH IRON</scope>
    <scope>COFACTOR</scope>
    <scope>FUNCTION</scope>
    <scope>CATALYTIC ACTIVITY</scope>
    <scope>PATHWAY</scope>
</reference>
<comment type="function">
    <text evidence="2 3 4 5 6 7 8 9 10 11 12 13 16 17">Dioxygenase; part of the gene cluster that mediates the biosynthesis of fungal ergot alkaloid (PubMed:14700635, PubMed:14732265, PubMed:15904941, PubMed:17308187, PubMed:17720822). DmaW catalyzes the first step of ergot alkaloid biosynthesis by condensing dimethylallyl diphosphate (DMAP) and tryptophan to form 4-dimethylallyl-L-tryptophan (PubMed:14732265). The second step is catalyzed by the methyltransferase easF that methylates 4-dimethylallyl-L-tryptophan in the presence of S-adenosyl-L-methionine, resulting in the formation of 4-dimethylallyl-L-abrine (By similarity). The catalase easC and the FAD-dependent oxidoreductase easE then transform 4-dimethylallyl-L-abrine to chanoclavine-I which is further oxidized by easD in the presence of NAD(+), resulting in the formation of chanoclavine-I aldehyde (PubMed:20118373, PubMed:21409592). Agroclavine dehydrogenase easG then mediates the conversion of chanoclavine-I aldehyde to agroclavine via a non-enzymatic adduct reaction: the substrate is an iminium intermediate that is formed spontaneously from chanoclavine-I aldehyde in the presence of glutathione (PubMed:20735127, PubMed:21494745). The presence of easA is not required to complete this reaction (PubMed:21494745). Further conversion of agroclavine to paspalic acid is a two-step process involving oxidation of agroclavine to elymoclavine and of elymoclavine to paspalic acid, the second step being performed by the elymoclavine oxidase cloA (PubMed:16538694, PubMed:17720822). Paspalic acid is then further converted to D-lysergic acid (PubMed:15904941). Ergopeptines are assembled from D-lysergic acid and three different amino acids by the D-lysergyl-peptide-synthetases composed each of a monomudular and a trimodular nonribosomal peptide synthetase subunit (PubMed:14700635, PubMed:15904941). LpsB and lpsC encode the monomodular subunits responsible for D-lysergic acid activation and incorporation into the ergopeptine backbone (PubMed:14700635). LpsA1 and A2 subunits encode the trimodular nonribosomal peptide synthetase assembling the tripeptide portion of ergopeptines (PubMed:14700635). LpsA1 is responsible for formation of the major ergopeptine, ergotamine, and lpsA2 for alpha-ergocryptine, the minor ergopeptine of the total alkaloid mixture elaborated by C.purpurea (PubMed:17560817, PubMed:19139103). D-lysergyl-tripeptides are assembled by the nonribosomal peptide synthetases and released as N-(D-lysergyl-aminoacyl)-lactams (PubMed:24361048). Cyclolization of the D-lysergyl-tripeptides is performed by the Fe(2+)/2-ketoglutarate-dependent dioxygenase easH which introduces a hydroxyl group into N-(D-lysergyl-aminoacyl)-lactam at alpha-C of the aminoacyl residue followed by spontaneous condensation with the terminal lactam carbonyl group (PubMed:24361048).</text>
</comment>
<comment type="cofactor">
    <cofactor evidence="13">
        <name>Fe cation</name>
        <dbReference type="ChEBI" id="CHEBI:24875"/>
    </cofactor>
</comment>
<comment type="pathway">
    <text evidence="13">Alkaloid biosynthesis; ergot alkaloid biosynthesis.</text>
</comment>
<comment type="subunit">
    <text evidence="1">Homodimer.</text>
</comment>
<comment type="similarity">
    <text evidence="15">Belongs to the PhyH family.</text>
</comment>
<accession>G8GV69</accession>
<accession>M1VVW4</accession>
<dbReference type="EC" id="1.14.11.-" evidence="13"/>
<dbReference type="EMBL" id="JN186799">
    <property type="protein sequence ID" value="AET79182.1"/>
    <property type="molecule type" value="Genomic_DNA"/>
</dbReference>
<dbReference type="EMBL" id="CAGA01000020">
    <property type="protein sequence ID" value="CCE30227.1"/>
    <property type="molecule type" value="Genomic_DNA"/>
</dbReference>
<dbReference type="PDB" id="4NAO">
    <property type="method" value="X-ray"/>
    <property type="resolution" value="1.65 A"/>
    <property type="chains" value="A=1-314"/>
</dbReference>
<dbReference type="PDBsum" id="4NAO"/>
<dbReference type="SMR" id="G8GV69"/>
<dbReference type="STRING" id="1111077.G8GV69"/>
<dbReference type="VEuPathDB" id="FungiDB:CPUR_04075"/>
<dbReference type="eggNOG" id="ENOG502S7ZW">
    <property type="taxonomic scope" value="Eukaryota"/>
</dbReference>
<dbReference type="OrthoDB" id="445007at2759"/>
<dbReference type="UniPathway" id="UPA00327"/>
<dbReference type="EvolutionaryTrace" id="G8GV69"/>
<dbReference type="Proteomes" id="UP000016801">
    <property type="component" value="Unassembled WGS sequence"/>
</dbReference>
<dbReference type="GO" id="GO:0051213">
    <property type="term" value="F:dioxygenase activity"/>
    <property type="evidence" value="ECO:0007669"/>
    <property type="project" value="UniProtKB-KW"/>
</dbReference>
<dbReference type="GO" id="GO:0046872">
    <property type="term" value="F:metal ion binding"/>
    <property type="evidence" value="ECO:0007669"/>
    <property type="project" value="UniProtKB-KW"/>
</dbReference>
<dbReference type="GO" id="GO:0035835">
    <property type="term" value="P:indole alkaloid biosynthetic process"/>
    <property type="evidence" value="ECO:0007669"/>
    <property type="project" value="UniProtKB-UniPathway"/>
</dbReference>
<dbReference type="Gene3D" id="2.60.120.620">
    <property type="entry name" value="q2cbj1_9rhob like domain"/>
    <property type="match status" value="1"/>
</dbReference>
<dbReference type="InterPro" id="IPR008775">
    <property type="entry name" value="Phytyl_CoA_dOase-like"/>
</dbReference>
<dbReference type="PANTHER" id="PTHR20883">
    <property type="entry name" value="PHYTANOYL-COA DIOXYGENASE DOMAIN CONTAINING 1"/>
    <property type="match status" value="1"/>
</dbReference>
<dbReference type="PANTHER" id="PTHR20883:SF15">
    <property type="entry name" value="PHYTANOYL-COA DIOXYGENASE DOMAIN-CONTAINING PROTEIN 1"/>
    <property type="match status" value="1"/>
</dbReference>
<dbReference type="Pfam" id="PF05721">
    <property type="entry name" value="PhyH"/>
    <property type="match status" value="1"/>
</dbReference>
<dbReference type="SUPFAM" id="SSF51197">
    <property type="entry name" value="Clavaminate synthase-like"/>
    <property type="match status" value="1"/>
</dbReference>
<name>EASH_CLAP2</name>
<feature type="chain" id="PRO_0000439145" description="Dioxygenase easH">
    <location>
        <begin position="1"/>
        <end position="314"/>
    </location>
</feature>
<feature type="binding site" evidence="13 18">
    <location>
        <position position="141"/>
    </location>
    <ligand>
        <name>Fe cation</name>
        <dbReference type="ChEBI" id="CHEBI:24875"/>
    </ligand>
</feature>
<feature type="binding site" evidence="13 18">
    <location>
        <position position="143"/>
    </location>
    <ligand>
        <name>Fe cation</name>
        <dbReference type="ChEBI" id="CHEBI:24875"/>
    </ligand>
</feature>
<feature type="binding site" evidence="13 18">
    <location>
        <position position="217"/>
    </location>
    <ligand>
        <name>Fe cation</name>
        <dbReference type="ChEBI" id="CHEBI:24875"/>
    </ligand>
</feature>
<feature type="strand" evidence="19">
    <location>
        <begin position="13"/>
        <end position="15"/>
    </location>
</feature>
<feature type="helix" evidence="19">
    <location>
        <begin position="20"/>
        <end position="30"/>
    </location>
</feature>
<feature type="strand" evidence="19">
    <location>
        <begin position="31"/>
        <end position="36"/>
    </location>
</feature>
<feature type="helix" evidence="19">
    <location>
        <begin position="41"/>
        <end position="59"/>
    </location>
</feature>
<feature type="helix" evidence="19">
    <location>
        <begin position="76"/>
        <end position="79"/>
    </location>
</feature>
<feature type="strand" evidence="19">
    <location>
        <begin position="84"/>
        <end position="87"/>
    </location>
</feature>
<feature type="helix" evidence="19">
    <location>
        <begin position="90"/>
        <end position="92"/>
    </location>
</feature>
<feature type="helix" evidence="19">
    <location>
        <begin position="95"/>
        <end position="99"/>
    </location>
</feature>
<feature type="helix" evidence="19">
    <location>
        <begin position="101"/>
        <end position="103"/>
    </location>
</feature>
<feature type="helix" evidence="19">
    <location>
        <begin position="105"/>
        <end position="114"/>
    </location>
</feature>
<feature type="turn" evidence="19">
    <location>
        <begin position="115"/>
        <end position="118"/>
    </location>
</feature>
<feature type="strand" evidence="19">
    <location>
        <begin position="121"/>
        <end position="126"/>
    </location>
</feature>
<feature type="strand" evidence="19">
    <location>
        <begin position="128"/>
        <end position="131"/>
    </location>
</feature>
<feature type="strand" evidence="19">
    <location>
        <begin position="161"/>
        <end position="168"/>
    </location>
</feature>
<feature type="turn" evidence="19">
    <location>
        <begin position="172"/>
        <end position="174"/>
    </location>
</feature>
<feature type="strand" evidence="19">
    <location>
        <begin position="177"/>
        <end position="180"/>
    </location>
</feature>
<feature type="helix" evidence="19">
    <location>
        <begin position="183"/>
        <end position="185"/>
    </location>
</feature>
<feature type="strand" evidence="19">
    <location>
        <begin position="198"/>
        <end position="201"/>
    </location>
</feature>
<feature type="strand" evidence="19">
    <location>
        <begin position="208"/>
        <end position="212"/>
    </location>
</feature>
<feature type="strand" evidence="19">
    <location>
        <begin position="224"/>
        <end position="226"/>
    </location>
</feature>
<feature type="strand" evidence="19">
    <location>
        <begin position="228"/>
        <end position="237"/>
    </location>
</feature>
<feature type="helix" evidence="19">
    <location>
        <begin position="251"/>
        <end position="255"/>
    </location>
</feature>
<feature type="helix" evidence="19">
    <location>
        <begin position="259"/>
        <end position="264"/>
    </location>
</feature>
<feature type="strand" evidence="19">
    <location>
        <begin position="270"/>
        <end position="272"/>
    </location>
</feature>
<feature type="strand" evidence="19">
    <location>
        <begin position="282"/>
        <end position="287"/>
    </location>
</feature>
<feature type="helix" evidence="19">
    <location>
        <begin position="292"/>
        <end position="295"/>
    </location>
</feature>
<feature type="helix" evidence="19">
    <location>
        <begin position="305"/>
        <end position="307"/>
    </location>
</feature>